<keyword id="KW-0877">Alternative promoter usage</keyword>
<keyword id="KW-0050">Antiport</keyword>
<keyword id="KW-1003">Cell membrane</keyword>
<keyword id="KW-0967">Endosome</keyword>
<keyword id="KW-0406">Ion transport</keyword>
<keyword id="KW-0472">Membrane</keyword>
<keyword id="KW-0597">Phosphoprotein</keyword>
<keyword id="KW-0732">Signal</keyword>
<keyword id="KW-0915">Sodium</keyword>
<keyword id="KW-0739">Sodium transport</keyword>
<keyword id="KW-0812">Transmembrane</keyword>
<keyword id="KW-1133">Transmembrane helix</keyword>
<keyword id="KW-0813">Transport</keyword>
<reference evidence="8 10" key="1">
    <citation type="journal article" date="2013" name="Am. J. Physiol.">
        <title>Expression of a novel isoform of Na+/H+ exchanger 3 (NHE3) in the kidney and intestine of banded houndshark Triakis scyllium.</title>
        <authorList>
            <person name="Li S."/>
            <person name="Kato A."/>
            <person name="Takabe S."/>
            <person name="Chen A.-P."/>
            <person name="Romero M.F."/>
            <person name="Umezawa T."/>
            <person name="Nakada T."/>
            <person name="Hyodo S."/>
            <person name="Hirose S."/>
        </authorList>
    </citation>
    <scope>NUCLEOTIDE SEQUENCE [MRNA] (ISOFORMS 1 AND 2)</scope>
    <scope>SUBCELLULAR LOCATION</scope>
    <scope>TISSUE SPECIFICITY</scope>
    <scope>INDUCTION</scope>
    <source>
        <tissue evidence="10">Gill</tissue>
        <tissue evidence="9">Kidney</tissue>
    </source>
</reference>
<gene>
    <name evidence="10" type="primary">slc9a3</name>
    <name evidence="7" type="synonym">nhe3</name>
</gene>
<protein>
    <recommendedName>
        <fullName evidence="7">Sodium/hydrogen exchanger 3</fullName>
    </recommendedName>
    <alternativeName>
        <fullName evidence="7">Na(+)/H(+) exchanger 3</fullName>
        <shortName evidence="7">NHE-3</shortName>
    </alternativeName>
    <alternativeName>
        <fullName evidence="2">Solute carrier family 9 member 3</fullName>
    </alternativeName>
</protein>
<evidence type="ECO:0000250" key="1">
    <source>
        <dbReference type="UniProtKB" id="P26432"/>
    </source>
</evidence>
<evidence type="ECO:0000250" key="2">
    <source>
        <dbReference type="UniProtKB" id="P48764"/>
    </source>
</evidence>
<evidence type="ECO:0000250" key="3">
    <source>
        <dbReference type="UniProtKB" id="Q28362"/>
    </source>
</evidence>
<evidence type="ECO:0000255" key="4"/>
<evidence type="ECO:0000256" key="5">
    <source>
        <dbReference type="SAM" id="MobiDB-lite"/>
    </source>
</evidence>
<evidence type="ECO:0000269" key="6">
    <source>
    </source>
</evidence>
<evidence type="ECO:0000303" key="7">
    <source>
    </source>
</evidence>
<evidence type="ECO:0000305" key="8"/>
<evidence type="ECO:0000312" key="9">
    <source>
        <dbReference type="EMBL" id="BAN04721.1"/>
    </source>
</evidence>
<evidence type="ECO:0000312" key="10">
    <source>
        <dbReference type="EMBL" id="BAN04722.1"/>
    </source>
</evidence>
<organism>
    <name type="scientific">Triakis scyllium</name>
    <name type="common">Banded houndshark</name>
    <name type="synonym">Hemigaleus pingi</name>
    <dbReference type="NCBI Taxonomy" id="30494"/>
    <lineage>
        <taxon>Eukaryota</taxon>
        <taxon>Metazoa</taxon>
        <taxon>Chordata</taxon>
        <taxon>Craniata</taxon>
        <taxon>Vertebrata</taxon>
        <taxon>Chondrichthyes</taxon>
        <taxon>Elasmobranchii</taxon>
        <taxon>Galeomorphii</taxon>
        <taxon>Galeoidea</taxon>
        <taxon>Carcharhiniformes</taxon>
        <taxon>Triakidae</taxon>
        <taxon>Triakis</taxon>
    </lineage>
</organism>
<accession>M5A7P9</accession>
<accession>M5A8K9</accession>
<sequence length="832" mass="92913">MGRNRSGCVARCVSLTALVLLLCCPVVRSSEAETDPDSHTEHGDSHGGSREGNDTGFQIVTFRWEHVQTPYVIALWILVASLGKIVFHLSEKVTSVVPESALLIVLGLILGGIVWAADHSASFTLTPTVFFFYLLPPIVLDAGYFMPNRHFFGNLGTILTYAVIGTVWNAATTGLSLYGVFLLGLMGDLKAGLLEFLLFGSLIAAVDPVAVLAVFEEVHVNEVLFIIVFGESLLNDAVTVVLYNVFNSFVEVGAGNVQGLDYFKGIVSFFVVSLGGTAVGIIFAFILSLVTRFTKHVRVIEPGFVFVISYLSYLTADMLSLSAILAITFCGICCQKYVKANLCEQSITTVRYAMKMLASGAETIIFMFLGISAVNPTIWTWNTAFILLTLVFISVYRVIGVVIQTWILNHYRVVQLEIIDQVVMSYGGLRGAVAFALVVLLDSNYVGERRLFVSTTIIVVYFTVIFQGLTIKPLVKWLKVKRSQHKEPLLNEKLHGRAFDHILSAIEDISGQIGHNYLRDKWTNFDRKYLSKIMMRKSAQISRDKILSVFRELNLKDAISYVSEGERKGSLAFIRSSSDVNVDFTGPRHSVVDSSVSAVLRESTSEVCLDMHAVENRAKSPKDREEIVTHHMLQQHLYKPRKRYRLNYSRHKLARSEGEKQDKEIFQRTMKKRLENFKPTKLGTNYTTKFRNMKKERAAKKKHSDAVPNGRLATHSVSFHVNKDSEVEDPADGGISFLITPASNDADETGTGIDNPSFSNEEDQSIYQMIPPWISNEETVIPSQRARLQIPRSPTNFRRLTPLQLSNRSIDAFLLADISDEHPLSFLPESSM</sequence>
<dbReference type="EMBL" id="AB632345">
    <property type="protein sequence ID" value="BAN04721.1"/>
    <property type="molecule type" value="mRNA"/>
</dbReference>
<dbReference type="EMBL" id="AB632346">
    <property type="protein sequence ID" value="BAN04722.1"/>
    <property type="molecule type" value="mRNA"/>
</dbReference>
<dbReference type="SMR" id="M5A7P9"/>
<dbReference type="GO" id="GO:0016324">
    <property type="term" value="C:apical plasma membrane"/>
    <property type="evidence" value="ECO:0000250"/>
    <property type="project" value="UniProtKB"/>
</dbReference>
<dbReference type="GO" id="GO:0031526">
    <property type="term" value="C:brush border membrane"/>
    <property type="evidence" value="ECO:0007669"/>
    <property type="project" value="TreeGrafter"/>
</dbReference>
<dbReference type="GO" id="GO:0031901">
    <property type="term" value="C:early endosome membrane"/>
    <property type="evidence" value="ECO:0007669"/>
    <property type="project" value="UniProtKB-SubCell"/>
</dbReference>
<dbReference type="GO" id="GO:0005886">
    <property type="term" value="C:plasma membrane"/>
    <property type="evidence" value="ECO:0000250"/>
    <property type="project" value="UniProtKB"/>
</dbReference>
<dbReference type="GO" id="GO:0055038">
    <property type="term" value="C:recycling endosome membrane"/>
    <property type="evidence" value="ECO:0007669"/>
    <property type="project" value="UniProtKB-SubCell"/>
</dbReference>
<dbReference type="GO" id="GO:0042802">
    <property type="term" value="F:identical protein binding"/>
    <property type="evidence" value="ECO:0000250"/>
    <property type="project" value="UniProtKB"/>
</dbReference>
<dbReference type="GO" id="GO:0035091">
    <property type="term" value="F:phosphatidylinositol binding"/>
    <property type="evidence" value="ECO:0000250"/>
    <property type="project" value="UniProtKB"/>
</dbReference>
<dbReference type="GO" id="GO:0015386">
    <property type="term" value="F:potassium:proton antiporter activity"/>
    <property type="evidence" value="ECO:0007669"/>
    <property type="project" value="TreeGrafter"/>
</dbReference>
<dbReference type="GO" id="GO:0015385">
    <property type="term" value="F:sodium:proton antiporter activity"/>
    <property type="evidence" value="ECO:0000250"/>
    <property type="project" value="UniProtKB"/>
</dbReference>
<dbReference type="GO" id="GO:0051453">
    <property type="term" value="P:regulation of intracellular pH"/>
    <property type="evidence" value="ECO:0007669"/>
    <property type="project" value="TreeGrafter"/>
</dbReference>
<dbReference type="GO" id="GO:0098719">
    <property type="term" value="P:sodium ion import across plasma membrane"/>
    <property type="evidence" value="ECO:0000250"/>
    <property type="project" value="UniProtKB"/>
</dbReference>
<dbReference type="Gene3D" id="6.10.140.1330">
    <property type="match status" value="1"/>
</dbReference>
<dbReference type="InterPro" id="IPR018422">
    <property type="entry name" value="Cation/H_exchanger_CPA1"/>
</dbReference>
<dbReference type="InterPro" id="IPR006153">
    <property type="entry name" value="Cation/H_exchanger_TM"/>
</dbReference>
<dbReference type="InterPro" id="IPR018410">
    <property type="entry name" value="Na/H_exchanger_3/5"/>
</dbReference>
<dbReference type="InterPro" id="IPR004709">
    <property type="entry name" value="NaH_exchanger"/>
</dbReference>
<dbReference type="NCBIfam" id="TIGR00840">
    <property type="entry name" value="b_cpa1"/>
    <property type="match status" value="1"/>
</dbReference>
<dbReference type="PANTHER" id="PTHR10110">
    <property type="entry name" value="SODIUM/HYDROGEN EXCHANGER"/>
    <property type="match status" value="1"/>
</dbReference>
<dbReference type="PANTHER" id="PTHR10110:SF90">
    <property type="entry name" value="SODIUM_HYDROGEN EXCHANGER 3"/>
    <property type="match status" value="1"/>
</dbReference>
<dbReference type="Pfam" id="PF00999">
    <property type="entry name" value="Na_H_Exchanger"/>
    <property type="match status" value="1"/>
</dbReference>
<dbReference type="PRINTS" id="PR01084">
    <property type="entry name" value="NAHEXCHNGR"/>
</dbReference>
<dbReference type="PRINTS" id="PR01087">
    <property type="entry name" value="NAHEXCHNGR3"/>
</dbReference>
<feature type="signal peptide" evidence="4">
    <location>
        <begin position="1"/>
        <end position="29"/>
    </location>
</feature>
<feature type="chain" id="PRO_0000423519" description="Sodium/hydrogen exchanger 3" evidence="4">
    <location>
        <begin position="30"/>
        <end position="832"/>
    </location>
</feature>
<feature type="topological domain" description="Extracellular" evidence="8">
    <location>
        <begin position="30"/>
        <end position="66"/>
    </location>
</feature>
<feature type="transmembrane region" description="Helical; Name=1" evidence="2">
    <location>
        <begin position="67"/>
        <end position="89"/>
    </location>
</feature>
<feature type="topological domain" description="Cytoplasmic" evidence="8">
    <location>
        <begin position="90"/>
        <end position="97"/>
    </location>
</feature>
<feature type="transmembrane region" description="Helical; Name=2" evidence="2">
    <location>
        <begin position="98"/>
        <end position="117"/>
    </location>
</feature>
<feature type="topological domain" description="Extracellular" evidence="8">
    <location>
        <begin position="118"/>
        <end position="126"/>
    </location>
</feature>
<feature type="transmembrane region" description="Helical; Name=3" evidence="2">
    <location>
        <begin position="127"/>
        <end position="144"/>
    </location>
</feature>
<feature type="topological domain" description="Cytoplasmic" evidence="8">
    <location>
        <begin position="145"/>
        <end position="147"/>
    </location>
</feature>
<feature type="transmembrane region" description="Helical; Name=4" evidence="2">
    <location>
        <begin position="148"/>
        <end position="183"/>
    </location>
</feature>
<feature type="topological domain" description="Extracellular" evidence="8">
    <location>
        <begin position="184"/>
        <end position="196"/>
    </location>
</feature>
<feature type="transmembrane region" description="Helical; Name=5" evidence="2">
    <location>
        <begin position="197"/>
        <end position="218"/>
    </location>
</feature>
<feature type="topological domain" description="Cytoplasmic" evidence="8">
    <location>
        <begin position="219"/>
        <end position="220"/>
    </location>
</feature>
<feature type="transmembrane region" description="Helical; Name=6" evidence="2">
    <location>
        <begin position="221"/>
        <end position="252"/>
    </location>
</feature>
<feature type="topological domain" description="Extracellular" evidence="8">
    <location>
        <begin position="253"/>
        <end position="259"/>
    </location>
</feature>
<feature type="transmembrane region" description="Helical; Name=7" evidence="2">
    <location>
        <begin position="260"/>
        <end position="294"/>
    </location>
</feature>
<feature type="topological domain" description="Cytoplasmic" evidence="8">
    <location>
        <begin position="295"/>
        <end position="296"/>
    </location>
</feature>
<feature type="transmembrane region" description="Helical; Name=8" evidence="2">
    <location>
        <begin position="297"/>
        <end position="319"/>
    </location>
</feature>
<feature type="topological domain" description="Extracellular" evidence="8">
    <location>
        <begin position="320"/>
        <end position="321"/>
    </location>
</feature>
<feature type="transmembrane region" description="Helical; Name=9" evidence="2">
    <location>
        <begin position="322"/>
        <end position="338"/>
    </location>
</feature>
<feature type="topological domain" description="Cytoplasmic" evidence="8">
    <location>
        <begin position="339"/>
        <end position="345"/>
    </location>
</feature>
<feature type="transmembrane region" description="Helical; Name=10" evidence="2">
    <location>
        <begin position="346"/>
        <end position="374"/>
    </location>
</feature>
<feature type="topological domain" description="Extracellular" evidence="8">
    <location>
        <begin position="375"/>
        <end position="382"/>
    </location>
</feature>
<feature type="transmembrane region" description="Helical; Name=11" evidence="2">
    <location>
        <begin position="383"/>
        <end position="404"/>
    </location>
</feature>
<feature type="topological domain" description="Cytoplasmic" evidence="8">
    <location>
        <begin position="405"/>
        <end position="417"/>
    </location>
</feature>
<feature type="transmembrane region" description="Helical; Name=12" evidence="2">
    <location>
        <begin position="418"/>
        <end position="441"/>
    </location>
</feature>
<feature type="topological domain" description="Extracellular" evidence="8">
    <location>
        <begin position="442"/>
        <end position="448"/>
    </location>
</feature>
<feature type="transmembrane region" description="Helical; Name=13" evidence="2">
    <location>
        <begin position="449"/>
        <end position="482"/>
    </location>
</feature>
<feature type="topological domain" description="Cytoplasmic" evidence="8">
    <location>
        <begin position="483"/>
        <end position="832"/>
    </location>
</feature>
<feature type="region of interest" description="Disordered" evidence="5">
    <location>
        <begin position="31"/>
        <end position="51"/>
    </location>
</feature>
<feature type="region of interest" description="Disordered" evidence="5">
    <location>
        <begin position="740"/>
        <end position="760"/>
    </location>
</feature>
<feature type="compositionally biased region" description="Basic and acidic residues" evidence="5">
    <location>
        <begin position="36"/>
        <end position="51"/>
    </location>
</feature>
<feature type="binding site" evidence="2">
    <location>
        <position position="153"/>
    </location>
    <ligand>
        <name>a 1,2-diacyl-sn-glycero-3-phospho-(1D-myo-inositol)</name>
        <dbReference type="ChEBI" id="CHEBI:57880"/>
    </ligand>
</feature>
<feature type="binding site" evidence="2">
    <location>
        <position position="156"/>
    </location>
    <ligand>
        <name>a 1,2-diacyl-sn-glycero-3-phospho-(1D-myo-inositol)</name>
        <dbReference type="ChEBI" id="CHEBI:57880"/>
    </ligand>
</feature>
<feature type="binding site" evidence="2">
    <location>
        <position position="157"/>
    </location>
    <ligand>
        <name>a 1,2-diacyl-sn-glycero-3-phospho-(1D-myo-inositol)</name>
        <dbReference type="ChEBI" id="CHEBI:57880"/>
    </ligand>
</feature>
<feature type="binding site" evidence="2">
    <location>
        <position position="512"/>
    </location>
    <ligand>
        <name>a 1,2-diacyl-sn-glycero-3-phospho-(1D-myo-inositol)</name>
        <dbReference type="ChEBI" id="CHEBI:57880"/>
    </ligand>
</feature>
<feature type="binding site" evidence="2">
    <location>
        <position position="513"/>
    </location>
    <ligand>
        <name>a 1,2-diacyl-sn-glycero-3-phospho-(1D-myo-inositol)</name>
        <dbReference type="ChEBI" id="CHEBI:57880"/>
    </ligand>
</feature>
<feature type="binding site" evidence="2">
    <location>
        <position position="515"/>
    </location>
    <ligand>
        <name>a 1,2-diacyl-sn-glycero-3-phospho-(1D-myo-inositol)</name>
        <dbReference type="ChEBI" id="CHEBI:57880"/>
    </ligand>
</feature>
<feature type="splice variant" id="VSP_047941" description="In isoform 2." evidence="7">
    <original>MGRNRSGCVARCVSLTALVLLLCCPVVRSSEAETDPDSHTEHGDSHGGSREGNDTGFQIVTFRWEHVQTPYVIALWILVASLG</original>
    <variation>MGKERSQCAGSRCLWSLALLAAGCSAAGTFSRSEPSAESQSSPQNSSNPGYQIVYFDWEYVEKPYVVAGWILVAGLA</variation>
    <location>
        <begin position="1"/>
        <end position="83"/>
    </location>
</feature>
<name>SL9A3_TRISC</name>
<proteinExistence type="evidence at protein level"/>
<comment type="function">
    <text evidence="2">Plasma membrane Na(+)/H(+) antiporter. Exchanges intracellular H(+) ions for extracellular Na(+) in 1:1 stoichiometry, playing a key role in salt and fluid absorption and pH homeostasis. Major apical Na(+)/H(+) exchanger in kidney and intestine playing an important role in renal and intestine Na(+) absorption and blood pressure regulation.</text>
</comment>
<comment type="catalytic activity">
    <reaction evidence="2">
        <text>Na(+)(in) + H(+)(out) = Na(+)(out) + H(+)(in)</text>
        <dbReference type="Rhea" id="RHEA:29419"/>
        <dbReference type="ChEBI" id="CHEBI:15378"/>
        <dbReference type="ChEBI" id="CHEBI:29101"/>
    </reaction>
</comment>
<comment type="activity regulation">
    <text evidence="1 2">Seems to switch between active and inactive modes in response to various stimuli (By similarity). Activated directly or indirectly by membrane phosphatidylinositol (PIs) (By similarity). Regulated by a variety of auxiliary proteins, which facilitate the maturation, cell surface expression and function of the transporter. Inhibited specifically by the drug tenapanor (By similarity).</text>
</comment>
<comment type="subunit">
    <text evidence="2">Homodimer.</text>
</comment>
<comment type="subcellular location">
    <subcellularLocation>
        <location evidence="6">Apical cell membrane</location>
        <topology evidence="2">Multi-pass membrane protein</topology>
    </subcellularLocation>
    <subcellularLocation>
        <location evidence="2">Cell membrane</location>
        <topology evidence="2">Multi-pass membrane protein</topology>
    </subcellularLocation>
    <subcellularLocation>
        <location evidence="2">Recycling endosome membrane</location>
        <topology evidence="2">Multi-pass membrane protein</topology>
    </subcellularLocation>
    <subcellularLocation>
        <location evidence="2">Early endosome membrane</location>
        <topology evidence="2">Multi-pass membrane protein</topology>
    </subcellularLocation>
    <text evidence="3">In intestinal epithelial cells, localizes to the ileal brush border. Phosphorylation at Ser-663 by SGK1 is associated with increased abundance at the cell membrane. Angiotensin-2 enhances apical expression (By similarity).</text>
</comment>
<comment type="alternative products">
    <event type="alternative promoter"/>
    <isoform>
        <id>M5A7P9-1</id>
        <name evidence="6">1</name>
        <name evidence="7">g</name>
        <sequence type="displayed"/>
    </isoform>
    <isoform>
        <id>M5A7P9-2</id>
        <name evidence="6">2</name>
        <name evidence="7">k/i</name>
        <sequence type="described" ref="VSP_047941"/>
    </isoform>
</comment>
<comment type="tissue specificity">
    <text evidence="6">Detected in early distal renal tubules in the kidney bundle zone, in proximal and late distal tubules in the kidney sinus zone, in absorptive epithelial cells of the intestine and in rectal epithelium (at protein level). Isoform 1 is expressed strongly in the gills, at intermediate levels in the kidney, spleen, rectum, spiral intestine and skin, and weakly in the brain, blood and rectal gland. Isoform 2 is expressed strongly in the kidney, rectum and spiral intestine, and weakly in muscles and the rectal gland.</text>
</comment>
<comment type="induction">
    <text evidence="6">High salinity induces expression of isoform 2 in the kidney; conversely, low salinity induces expression in the intestine.</text>
</comment>
<comment type="domain">
    <text evidence="2">The C-terminal intracellular domain is subject to extensive post-translational modifications and binding partner interactions which regulate transporter activity, scaffolding functions, downstream events and localization.</text>
</comment>
<comment type="similarity">
    <text evidence="4">Belongs to the monovalent cation:proton antiporter 1 (CPA1) transporter (TC 2.A.36) family.</text>
</comment>